<organism>
    <name type="scientific">Shewanella sp. (strain MR-4)</name>
    <dbReference type="NCBI Taxonomy" id="60480"/>
    <lineage>
        <taxon>Bacteria</taxon>
        <taxon>Pseudomonadati</taxon>
        <taxon>Pseudomonadota</taxon>
        <taxon>Gammaproteobacteria</taxon>
        <taxon>Alteromonadales</taxon>
        <taxon>Shewanellaceae</taxon>
        <taxon>Shewanella</taxon>
    </lineage>
</organism>
<sequence length="439" mass="50007">MDHLAHHYHAHIAELNRRVAEIVSREALSGLVIHSGQPHRMFLDDINYPFKANPHFKAWLPVLDNPNCWLVVNGRDKPQLIFYHPVDFWHKVSDVPEMFWTEHFEIKLLTKADKVAELLPSDITNWAYLGEHLDVAEVLGFTSRNPDSVMSYLHFHRTTKTEYELECMRRANQIAVQGHLAAKNAFYNGASEFEIQQQYLSAVGQGENEVPYGNIIALNQNAAILHYTALEHQNPARRLSFLIDAGASYFGYASDITRTYAFEKNRFDELITAMNKAQLELIDMMRPGVRYPDLHLATHGKVAQMLLDFELATGDAQGLVDQGITSAFFPHGLGHMLGLQVHDVGGFAFDERGTHIPAPEAHPFLRCTRILAPNQVLTMEPGLYIIDTLLNELKQDSRDQQINWRTVDELRPFGGIRIEDNVIVHQDRNENMTRELGLA</sequence>
<reference key="1">
    <citation type="submission" date="2006-08" db="EMBL/GenBank/DDBJ databases">
        <title>Complete sequence of Shewanella sp. MR-4.</title>
        <authorList>
            <consortium name="US DOE Joint Genome Institute"/>
            <person name="Copeland A."/>
            <person name="Lucas S."/>
            <person name="Lapidus A."/>
            <person name="Barry K."/>
            <person name="Detter J.C."/>
            <person name="Glavina del Rio T."/>
            <person name="Hammon N."/>
            <person name="Israni S."/>
            <person name="Dalin E."/>
            <person name="Tice H."/>
            <person name="Pitluck S."/>
            <person name="Kiss H."/>
            <person name="Brettin T."/>
            <person name="Bruce D."/>
            <person name="Han C."/>
            <person name="Tapia R."/>
            <person name="Gilna P."/>
            <person name="Schmutz J."/>
            <person name="Larimer F."/>
            <person name="Land M."/>
            <person name="Hauser L."/>
            <person name="Kyrpides N."/>
            <person name="Mikhailova N."/>
            <person name="Nealson K."/>
            <person name="Konstantinidis K."/>
            <person name="Klappenbach J."/>
            <person name="Tiedje J."/>
            <person name="Richardson P."/>
        </authorList>
    </citation>
    <scope>NUCLEOTIDE SEQUENCE [LARGE SCALE GENOMIC DNA]</scope>
    <source>
        <strain>MR-4</strain>
    </source>
</reference>
<comment type="function">
    <text evidence="1">Splits dipeptides with a prolyl residue in the C-terminal position.</text>
</comment>
<comment type="catalytic activity">
    <reaction evidence="1">
        <text>Xaa-L-Pro dipeptide + H2O = an L-alpha-amino acid + L-proline</text>
        <dbReference type="Rhea" id="RHEA:76407"/>
        <dbReference type="ChEBI" id="CHEBI:15377"/>
        <dbReference type="ChEBI" id="CHEBI:59869"/>
        <dbReference type="ChEBI" id="CHEBI:60039"/>
        <dbReference type="ChEBI" id="CHEBI:195196"/>
        <dbReference type="EC" id="3.4.13.9"/>
    </reaction>
</comment>
<comment type="cofactor">
    <cofactor evidence="1">
        <name>Mn(2+)</name>
        <dbReference type="ChEBI" id="CHEBI:29035"/>
    </cofactor>
    <text evidence="1">Binds 2 manganese ions per subunit.</text>
</comment>
<comment type="similarity">
    <text evidence="1">Belongs to the peptidase M24B family. Bacterial-type prolidase subfamily.</text>
</comment>
<gene>
    <name evidence="1" type="primary">pepQ</name>
    <name type="ordered locus">Shewmr4_0019</name>
</gene>
<keyword id="KW-0224">Dipeptidase</keyword>
<keyword id="KW-0378">Hydrolase</keyword>
<keyword id="KW-0464">Manganese</keyword>
<keyword id="KW-0479">Metal-binding</keyword>
<keyword id="KW-0482">Metalloprotease</keyword>
<keyword id="KW-0645">Protease</keyword>
<dbReference type="EC" id="3.4.13.9" evidence="1"/>
<dbReference type="EMBL" id="CP000446">
    <property type="protein sequence ID" value="ABI37101.1"/>
    <property type="molecule type" value="Genomic_DNA"/>
</dbReference>
<dbReference type="RefSeq" id="WP_011620855.1">
    <property type="nucleotide sequence ID" value="NC_008321.1"/>
</dbReference>
<dbReference type="SMR" id="Q0HPB6"/>
<dbReference type="MEROPS" id="M24.003"/>
<dbReference type="KEGG" id="she:Shewmr4_0019"/>
<dbReference type="HOGENOM" id="CLU_050675_0_0_6"/>
<dbReference type="GO" id="GO:0005829">
    <property type="term" value="C:cytosol"/>
    <property type="evidence" value="ECO:0007669"/>
    <property type="project" value="TreeGrafter"/>
</dbReference>
<dbReference type="GO" id="GO:0004177">
    <property type="term" value="F:aminopeptidase activity"/>
    <property type="evidence" value="ECO:0007669"/>
    <property type="project" value="TreeGrafter"/>
</dbReference>
<dbReference type="GO" id="GO:0046872">
    <property type="term" value="F:metal ion binding"/>
    <property type="evidence" value="ECO:0007669"/>
    <property type="project" value="UniProtKB-KW"/>
</dbReference>
<dbReference type="GO" id="GO:0008235">
    <property type="term" value="F:metalloexopeptidase activity"/>
    <property type="evidence" value="ECO:0007669"/>
    <property type="project" value="UniProtKB-UniRule"/>
</dbReference>
<dbReference type="GO" id="GO:0016795">
    <property type="term" value="F:phosphoric triester hydrolase activity"/>
    <property type="evidence" value="ECO:0007669"/>
    <property type="project" value="InterPro"/>
</dbReference>
<dbReference type="GO" id="GO:0102009">
    <property type="term" value="F:proline dipeptidase activity"/>
    <property type="evidence" value="ECO:0007669"/>
    <property type="project" value="UniProtKB-EC"/>
</dbReference>
<dbReference type="GO" id="GO:0006508">
    <property type="term" value="P:proteolysis"/>
    <property type="evidence" value="ECO:0007669"/>
    <property type="project" value="UniProtKB-KW"/>
</dbReference>
<dbReference type="CDD" id="cd01087">
    <property type="entry name" value="Prolidase"/>
    <property type="match status" value="1"/>
</dbReference>
<dbReference type="Gene3D" id="3.90.230.10">
    <property type="entry name" value="Creatinase/methionine aminopeptidase superfamily"/>
    <property type="match status" value="1"/>
</dbReference>
<dbReference type="Gene3D" id="3.40.350.10">
    <property type="entry name" value="Creatinase/prolidase N-terminal domain"/>
    <property type="match status" value="1"/>
</dbReference>
<dbReference type="HAMAP" id="MF_01279">
    <property type="entry name" value="X_Pro_dipeptid"/>
    <property type="match status" value="1"/>
</dbReference>
<dbReference type="InterPro" id="IPR029149">
    <property type="entry name" value="Creatin/AminoP/Spt16_N"/>
</dbReference>
<dbReference type="InterPro" id="IPR036005">
    <property type="entry name" value="Creatinase/aminopeptidase-like"/>
</dbReference>
<dbReference type="InterPro" id="IPR048819">
    <property type="entry name" value="PepQ_N"/>
</dbReference>
<dbReference type="InterPro" id="IPR000994">
    <property type="entry name" value="Pept_M24"/>
</dbReference>
<dbReference type="InterPro" id="IPR001131">
    <property type="entry name" value="Peptidase_M24B_aminopep-P_CS"/>
</dbReference>
<dbReference type="InterPro" id="IPR052433">
    <property type="entry name" value="X-Pro_dipept-like"/>
</dbReference>
<dbReference type="InterPro" id="IPR022846">
    <property type="entry name" value="X_Pro_dipept"/>
</dbReference>
<dbReference type="NCBIfam" id="NF010133">
    <property type="entry name" value="PRK13607.1"/>
    <property type="match status" value="1"/>
</dbReference>
<dbReference type="PANTHER" id="PTHR43226">
    <property type="entry name" value="XAA-PRO AMINOPEPTIDASE 3"/>
    <property type="match status" value="1"/>
</dbReference>
<dbReference type="PANTHER" id="PTHR43226:SF8">
    <property type="entry name" value="XAA-PRO DIPEPTIDASE"/>
    <property type="match status" value="1"/>
</dbReference>
<dbReference type="Pfam" id="PF21216">
    <property type="entry name" value="PepQ_N"/>
    <property type="match status" value="1"/>
</dbReference>
<dbReference type="Pfam" id="PF00557">
    <property type="entry name" value="Peptidase_M24"/>
    <property type="match status" value="1"/>
</dbReference>
<dbReference type="SUPFAM" id="SSF55920">
    <property type="entry name" value="Creatinase/aminopeptidase"/>
    <property type="match status" value="1"/>
</dbReference>
<dbReference type="PROSITE" id="PS00491">
    <property type="entry name" value="PROLINE_PEPTIDASE"/>
    <property type="match status" value="1"/>
</dbReference>
<name>PEPQ_SHESM</name>
<accession>Q0HPB6</accession>
<protein>
    <recommendedName>
        <fullName evidence="1">Xaa-Pro dipeptidase</fullName>
        <shortName evidence="1">X-Pro dipeptidase</shortName>
        <ecNumber evidence="1">3.4.13.9</ecNumber>
    </recommendedName>
    <alternativeName>
        <fullName evidence="1">Imidodipeptidase</fullName>
    </alternativeName>
    <alternativeName>
        <fullName evidence="1">Proline dipeptidase</fullName>
        <shortName evidence="1">Prolidase</shortName>
    </alternativeName>
</protein>
<proteinExistence type="inferred from homology"/>
<feature type="chain" id="PRO_0000303863" description="Xaa-Pro dipeptidase">
    <location>
        <begin position="1"/>
        <end position="439"/>
    </location>
</feature>
<feature type="binding site" evidence="1">
    <location>
        <position position="244"/>
    </location>
    <ligand>
        <name>Mn(2+)</name>
        <dbReference type="ChEBI" id="CHEBI:29035"/>
        <label>2</label>
    </ligand>
</feature>
<feature type="binding site" evidence="1">
    <location>
        <position position="255"/>
    </location>
    <ligand>
        <name>Mn(2+)</name>
        <dbReference type="ChEBI" id="CHEBI:29035"/>
        <label>1</label>
    </ligand>
</feature>
<feature type="binding site" evidence="1">
    <location>
        <position position="255"/>
    </location>
    <ligand>
        <name>Mn(2+)</name>
        <dbReference type="ChEBI" id="CHEBI:29035"/>
        <label>2</label>
    </ligand>
</feature>
<feature type="binding site" evidence="1">
    <location>
        <position position="335"/>
    </location>
    <ligand>
        <name>Mn(2+)</name>
        <dbReference type="ChEBI" id="CHEBI:29035"/>
        <label>1</label>
    </ligand>
</feature>
<feature type="binding site" evidence="1">
    <location>
        <position position="380"/>
    </location>
    <ligand>
        <name>Mn(2+)</name>
        <dbReference type="ChEBI" id="CHEBI:29035"/>
        <label>1</label>
    </ligand>
</feature>
<feature type="binding site" evidence="1">
    <location>
        <position position="419"/>
    </location>
    <ligand>
        <name>Mn(2+)</name>
        <dbReference type="ChEBI" id="CHEBI:29035"/>
        <label>1</label>
    </ligand>
</feature>
<feature type="binding site" evidence="1">
    <location>
        <position position="419"/>
    </location>
    <ligand>
        <name>Mn(2+)</name>
        <dbReference type="ChEBI" id="CHEBI:29035"/>
        <label>2</label>
    </ligand>
</feature>
<evidence type="ECO:0000255" key="1">
    <source>
        <dbReference type="HAMAP-Rule" id="MF_01279"/>
    </source>
</evidence>